<comment type="function">
    <text evidence="1">Catalyzes the conversion of uracil and 5-phospho-alpha-D-ribose 1-diphosphate (PRPP) to UMP and diphosphate.</text>
</comment>
<comment type="catalytic activity">
    <reaction evidence="1">
        <text>UMP + diphosphate = 5-phospho-alpha-D-ribose 1-diphosphate + uracil</text>
        <dbReference type="Rhea" id="RHEA:13017"/>
        <dbReference type="ChEBI" id="CHEBI:17568"/>
        <dbReference type="ChEBI" id="CHEBI:33019"/>
        <dbReference type="ChEBI" id="CHEBI:57865"/>
        <dbReference type="ChEBI" id="CHEBI:58017"/>
        <dbReference type="EC" id="2.4.2.9"/>
    </reaction>
</comment>
<comment type="cofactor">
    <cofactor evidence="1">
        <name>Mg(2+)</name>
        <dbReference type="ChEBI" id="CHEBI:18420"/>
    </cofactor>
    <text evidence="1">Binds 1 Mg(2+) ion per subunit. The magnesium is bound as Mg-PRPP.</text>
</comment>
<comment type="activity regulation">
    <text evidence="1">Allosterically activated by GTP.</text>
</comment>
<comment type="pathway">
    <text evidence="1">Pyrimidine metabolism; UMP biosynthesis via salvage pathway; UMP from uracil: step 1/1.</text>
</comment>
<comment type="similarity">
    <text evidence="1">Belongs to the UPRTase family.</text>
</comment>
<evidence type="ECO:0000255" key="1">
    <source>
        <dbReference type="HAMAP-Rule" id="MF_01218"/>
    </source>
</evidence>
<proteinExistence type="inferred from homology"/>
<feature type="chain" id="PRO_0000120873" description="Uracil phosphoribosyltransferase">
    <location>
        <begin position="1"/>
        <end position="209"/>
    </location>
</feature>
<feature type="binding site" evidence="1">
    <location>
        <position position="79"/>
    </location>
    <ligand>
        <name>5-phospho-alpha-D-ribose 1-diphosphate</name>
        <dbReference type="ChEBI" id="CHEBI:58017"/>
    </ligand>
</feature>
<feature type="binding site" evidence="1">
    <location>
        <position position="104"/>
    </location>
    <ligand>
        <name>5-phospho-alpha-D-ribose 1-diphosphate</name>
        <dbReference type="ChEBI" id="CHEBI:58017"/>
    </ligand>
</feature>
<feature type="binding site" evidence="1">
    <location>
        <begin position="131"/>
        <end position="139"/>
    </location>
    <ligand>
        <name>5-phospho-alpha-D-ribose 1-diphosphate</name>
        <dbReference type="ChEBI" id="CHEBI:58017"/>
    </ligand>
</feature>
<feature type="binding site" evidence="1">
    <location>
        <position position="194"/>
    </location>
    <ligand>
        <name>uracil</name>
        <dbReference type="ChEBI" id="CHEBI:17568"/>
    </ligand>
</feature>
<feature type="binding site" evidence="1">
    <location>
        <begin position="199"/>
        <end position="201"/>
    </location>
    <ligand>
        <name>uracil</name>
        <dbReference type="ChEBI" id="CHEBI:17568"/>
    </ligand>
</feature>
<feature type="binding site" evidence="1">
    <location>
        <position position="200"/>
    </location>
    <ligand>
        <name>5-phospho-alpha-D-ribose 1-diphosphate</name>
        <dbReference type="ChEBI" id="CHEBI:58017"/>
    </ligand>
</feature>
<gene>
    <name evidence="1" type="primary">upp</name>
    <name type="ordered locus">mll3162</name>
</gene>
<name>UPP_RHILO</name>
<keyword id="KW-0021">Allosteric enzyme</keyword>
<keyword id="KW-0328">Glycosyltransferase</keyword>
<keyword id="KW-0342">GTP-binding</keyword>
<keyword id="KW-0460">Magnesium</keyword>
<keyword id="KW-0547">Nucleotide-binding</keyword>
<keyword id="KW-0808">Transferase</keyword>
<protein>
    <recommendedName>
        <fullName evidence="1">Uracil phosphoribosyltransferase</fullName>
        <ecNumber evidence="1">2.4.2.9</ecNumber>
    </recommendedName>
    <alternativeName>
        <fullName evidence="1">UMP pyrophosphorylase</fullName>
    </alternativeName>
    <alternativeName>
        <fullName evidence="1">UPRTase</fullName>
    </alternativeName>
</protein>
<sequence length="209" mass="22927">MKGVTVVDHPLVQHKLTIMRKKETSTAGFRRLLREISLLLGYEVTRNLELTTTTIETPIETMEAPTLEGKKLVFASVLRAGNGLLEGLLDLVPAARVAHIGLYRDHETLEAVEYFFKAPSDLADRLVIVVDPMLATANSAIAAIDKLKGRGATNIRFLCLLAAPEGIERFTKAHPDVPVFTASIDRQLNEKGYIMPGLGDAGDRMYGTK</sequence>
<reference key="1">
    <citation type="journal article" date="2000" name="DNA Res.">
        <title>Complete genome structure of the nitrogen-fixing symbiotic bacterium Mesorhizobium loti.</title>
        <authorList>
            <person name="Kaneko T."/>
            <person name="Nakamura Y."/>
            <person name="Sato S."/>
            <person name="Asamizu E."/>
            <person name="Kato T."/>
            <person name="Sasamoto S."/>
            <person name="Watanabe A."/>
            <person name="Idesawa K."/>
            <person name="Ishikawa A."/>
            <person name="Kawashima K."/>
            <person name="Kimura T."/>
            <person name="Kishida Y."/>
            <person name="Kiyokawa C."/>
            <person name="Kohara M."/>
            <person name="Matsumoto M."/>
            <person name="Matsuno A."/>
            <person name="Mochizuki Y."/>
            <person name="Nakayama S."/>
            <person name="Nakazaki N."/>
            <person name="Shimpo S."/>
            <person name="Sugimoto M."/>
            <person name="Takeuchi C."/>
            <person name="Yamada M."/>
            <person name="Tabata S."/>
        </authorList>
    </citation>
    <scope>NUCLEOTIDE SEQUENCE [LARGE SCALE GENOMIC DNA]</scope>
    <source>
        <strain>LMG 29417 / CECT 9101 / MAFF 303099</strain>
    </source>
</reference>
<organism>
    <name type="scientific">Mesorhizobium japonicum (strain LMG 29417 / CECT 9101 / MAFF 303099)</name>
    <name type="common">Mesorhizobium loti (strain MAFF 303099)</name>
    <dbReference type="NCBI Taxonomy" id="266835"/>
    <lineage>
        <taxon>Bacteria</taxon>
        <taxon>Pseudomonadati</taxon>
        <taxon>Pseudomonadota</taxon>
        <taxon>Alphaproteobacteria</taxon>
        <taxon>Hyphomicrobiales</taxon>
        <taxon>Phyllobacteriaceae</taxon>
        <taxon>Mesorhizobium</taxon>
    </lineage>
</organism>
<accession>Q98GV3</accession>
<dbReference type="EC" id="2.4.2.9" evidence="1"/>
<dbReference type="EMBL" id="BA000012">
    <property type="protein sequence ID" value="BAB50113.1"/>
    <property type="molecule type" value="Genomic_DNA"/>
</dbReference>
<dbReference type="RefSeq" id="WP_010911460.1">
    <property type="nucleotide sequence ID" value="NC_002678.2"/>
</dbReference>
<dbReference type="SMR" id="Q98GV3"/>
<dbReference type="KEGG" id="mlo:mll3162"/>
<dbReference type="eggNOG" id="COG0035">
    <property type="taxonomic scope" value="Bacteria"/>
</dbReference>
<dbReference type="HOGENOM" id="CLU_067096_2_2_5"/>
<dbReference type="UniPathway" id="UPA00574">
    <property type="reaction ID" value="UER00636"/>
</dbReference>
<dbReference type="Proteomes" id="UP000000552">
    <property type="component" value="Chromosome"/>
</dbReference>
<dbReference type="GO" id="GO:0005525">
    <property type="term" value="F:GTP binding"/>
    <property type="evidence" value="ECO:0007669"/>
    <property type="project" value="UniProtKB-KW"/>
</dbReference>
<dbReference type="GO" id="GO:0000287">
    <property type="term" value="F:magnesium ion binding"/>
    <property type="evidence" value="ECO:0007669"/>
    <property type="project" value="UniProtKB-UniRule"/>
</dbReference>
<dbReference type="GO" id="GO:0004845">
    <property type="term" value="F:uracil phosphoribosyltransferase activity"/>
    <property type="evidence" value="ECO:0007669"/>
    <property type="project" value="UniProtKB-UniRule"/>
</dbReference>
<dbReference type="GO" id="GO:0044206">
    <property type="term" value="P:UMP salvage"/>
    <property type="evidence" value="ECO:0007669"/>
    <property type="project" value="UniProtKB-UniRule"/>
</dbReference>
<dbReference type="GO" id="GO:0006223">
    <property type="term" value="P:uracil salvage"/>
    <property type="evidence" value="ECO:0007669"/>
    <property type="project" value="InterPro"/>
</dbReference>
<dbReference type="CDD" id="cd06223">
    <property type="entry name" value="PRTases_typeI"/>
    <property type="match status" value="1"/>
</dbReference>
<dbReference type="FunFam" id="3.40.50.2020:FF:000003">
    <property type="entry name" value="Uracil phosphoribosyltransferase"/>
    <property type="match status" value="1"/>
</dbReference>
<dbReference type="Gene3D" id="3.40.50.2020">
    <property type="match status" value="1"/>
</dbReference>
<dbReference type="HAMAP" id="MF_01218_B">
    <property type="entry name" value="Upp_B"/>
    <property type="match status" value="1"/>
</dbReference>
<dbReference type="InterPro" id="IPR000836">
    <property type="entry name" value="PRibTrfase_dom"/>
</dbReference>
<dbReference type="InterPro" id="IPR029057">
    <property type="entry name" value="PRTase-like"/>
</dbReference>
<dbReference type="InterPro" id="IPR034332">
    <property type="entry name" value="Upp_B"/>
</dbReference>
<dbReference type="InterPro" id="IPR050054">
    <property type="entry name" value="UPRTase/APRTase"/>
</dbReference>
<dbReference type="InterPro" id="IPR005765">
    <property type="entry name" value="Ura_phspho_trans"/>
</dbReference>
<dbReference type="NCBIfam" id="NF001097">
    <property type="entry name" value="PRK00129.1"/>
    <property type="match status" value="1"/>
</dbReference>
<dbReference type="NCBIfam" id="TIGR01091">
    <property type="entry name" value="upp"/>
    <property type="match status" value="1"/>
</dbReference>
<dbReference type="PANTHER" id="PTHR32315">
    <property type="entry name" value="ADENINE PHOSPHORIBOSYLTRANSFERASE"/>
    <property type="match status" value="1"/>
</dbReference>
<dbReference type="PANTHER" id="PTHR32315:SF4">
    <property type="entry name" value="URACIL PHOSPHORIBOSYLTRANSFERASE, CHLOROPLASTIC"/>
    <property type="match status" value="1"/>
</dbReference>
<dbReference type="Pfam" id="PF14681">
    <property type="entry name" value="UPRTase"/>
    <property type="match status" value="1"/>
</dbReference>
<dbReference type="SUPFAM" id="SSF53271">
    <property type="entry name" value="PRTase-like"/>
    <property type="match status" value="1"/>
</dbReference>